<protein>
    <recommendedName>
        <fullName>Probable endo-1,3(4)-beta-glucanase AFUB_029980</fullName>
        <ecNumber>3.2.1.6</ecNumber>
    </recommendedName>
    <alternativeName>
        <fullName>Mixed-linked glucanase AFUB_029980</fullName>
    </alternativeName>
</protein>
<dbReference type="EC" id="3.2.1.6"/>
<dbReference type="EMBL" id="DS499595">
    <property type="protein sequence ID" value="EDP54938.1"/>
    <property type="molecule type" value="Genomic_DNA"/>
</dbReference>
<dbReference type="SMR" id="B0XTU6"/>
<dbReference type="EnsemblFungi" id="EDP54938">
    <property type="protein sequence ID" value="EDP54938"/>
    <property type="gene ID" value="AFUB_029980"/>
</dbReference>
<dbReference type="VEuPathDB" id="FungiDB:AFUB_029980"/>
<dbReference type="HOGENOM" id="CLU_016972_4_0_1"/>
<dbReference type="OrthoDB" id="2097at5052"/>
<dbReference type="PhylomeDB" id="B0XTU6"/>
<dbReference type="Proteomes" id="UP000001699">
    <property type="component" value="Unassembled WGS sequence"/>
</dbReference>
<dbReference type="GO" id="GO:0005886">
    <property type="term" value="C:plasma membrane"/>
    <property type="evidence" value="ECO:0007669"/>
    <property type="project" value="UniProtKB-SubCell"/>
</dbReference>
<dbReference type="GO" id="GO:0098552">
    <property type="term" value="C:side of membrane"/>
    <property type="evidence" value="ECO:0007669"/>
    <property type="project" value="UniProtKB-KW"/>
</dbReference>
<dbReference type="GO" id="GO:0052861">
    <property type="term" value="F:endo-1,3(4)-beta-glucanase activity"/>
    <property type="evidence" value="ECO:0007669"/>
    <property type="project" value="UniProtKB-EC"/>
</dbReference>
<dbReference type="GO" id="GO:0030245">
    <property type="term" value="P:cellulose catabolic process"/>
    <property type="evidence" value="ECO:0007669"/>
    <property type="project" value="UniProtKB-KW"/>
</dbReference>
<dbReference type="CDD" id="cd02181">
    <property type="entry name" value="GH16_fungal_Lam16A_glucanase"/>
    <property type="match status" value="1"/>
</dbReference>
<dbReference type="FunFam" id="2.60.120.200:FF:000114">
    <property type="entry name" value="Probable endo-1,3(4)-beta-glucanase NFIA_089530"/>
    <property type="match status" value="1"/>
</dbReference>
<dbReference type="Gene3D" id="2.60.120.200">
    <property type="match status" value="1"/>
</dbReference>
<dbReference type="InterPro" id="IPR013320">
    <property type="entry name" value="ConA-like_dom_sf"/>
</dbReference>
<dbReference type="InterPro" id="IPR000757">
    <property type="entry name" value="GH16"/>
</dbReference>
<dbReference type="InterPro" id="IPR050546">
    <property type="entry name" value="Glycosyl_Hydrlase_16"/>
</dbReference>
<dbReference type="PANTHER" id="PTHR10963:SF58">
    <property type="entry name" value="ENDO-1,3(4)-BETA-GLUCANASE XGEA"/>
    <property type="match status" value="1"/>
</dbReference>
<dbReference type="PANTHER" id="PTHR10963">
    <property type="entry name" value="GLYCOSYL HYDROLASE-RELATED"/>
    <property type="match status" value="1"/>
</dbReference>
<dbReference type="SUPFAM" id="SSF49899">
    <property type="entry name" value="Concanavalin A-like lectins/glucanases"/>
    <property type="match status" value="1"/>
</dbReference>
<dbReference type="PROSITE" id="PS51762">
    <property type="entry name" value="GH16_2"/>
    <property type="match status" value="1"/>
</dbReference>
<sequence length="652" mass="65993">MAPSSLLLSVGSLITSSLVSATALEARQSQTYQLAESWQGESFINDWNFFDGADPTNGYVTYVNQSFAKQSGLVKVTESGSFYMGVDYESTLNPNGAGRESVRIESKNYYTEGLYVIDIEHMPGSICGTWPAFWSVGKNWPNDGEIDIIEGVNLQKANKIVLHTSGSCDVSGSNDMTGTLSSSECGEASGTVGCVVKGTNGSSGDPFNESGGGVYAMEWTDTFIKIWFFPRSQIPASLASGNPDTSSFGTPMAHLQGSCDFAERFKAQKLIIDTTFCGDWAGNVFAESTCPMSDPSSPMQSCVNYVAQNPAAFKEAYWEINSIKIYQYGVSAASSAAVSQATASKVEGTRVSAQAANTATPTVPAPVETTTVPQPAQTNTVATSAADHATPSSAETTTVPAATGAPSVSATEGGDSELESTSTVYVTSTTTICPVAESSSAAAAGGKEDAPSNGTSGAEVAATSVAAAAPAAATSGHPGADAIANSAAATSTDAQSESATSRLTAGALSEIPTAPPEPVSQAVSTGSFDDSDTAQGDSEEQGSIASASVAPSTIPVPASSSAAALGGSSIASSFASSRLIPRPTGSSTAASATAIATWSPTAGESASGTAKESATLTTPSEVFFTPGLSNGANRMSVGLSGLIGVMFIAALA</sequence>
<accession>B0XTU6</accession>
<evidence type="ECO:0000250" key="1"/>
<evidence type="ECO:0000255" key="2"/>
<evidence type="ECO:0000255" key="3">
    <source>
        <dbReference type="PROSITE-ProRule" id="PRU01098"/>
    </source>
</evidence>
<evidence type="ECO:0000256" key="4">
    <source>
        <dbReference type="SAM" id="MobiDB-lite"/>
    </source>
</evidence>
<evidence type="ECO:0000305" key="5"/>
<comment type="function">
    <text evidence="1">Mixed-linked glucanase involved in the degradation of complex natural cellulosic substrates.</text>
</comment>
<comment type="catalytic activity">
    <reaction>
        <text>Endohydrolysis of (1-&gt;3)- or (1-&gt;4)-linkages in beta-D-glucans when the glucose residue whose reducing group is involved in the linkage to be hydrolyzed is itself substituted at C-3.</text>
        <dbReference type="EC" id="3.2.1.6"/>
    </reaction>
</comment>
<comment type="subcellular location">
    <subcellularLocation>
        <location evidence="1">Cell membrane</location>
        <topology evidence="1">Lipid-anchor</topology>
        <topology evidence="1">GPI-anchor</topology>
    </subcellularLocation>
</comment>
<comment type="similarity">
    <text evidence="5">Belongs to the glycosyl hydrolase 16 family.</text>
</comment>
<gene>
    <name type="ORF">AFUB_029980</name>
</gene>
<proteinExistence type="inferred from homology"/>
<name>EGLX_ASPFC</name>
<keyword id="KW-0119">Carbohydrate metabolism</keyword>
<keyword id="KW-1003">Cell membrane</keyword>
<keyword id="KW-0136">Cellulose degradation</keyword>
<keyword id="KW-0325">Glycoprotein</keyword>
<keyword id="KW-0326">Glycosidase</keyword>
<keyword id="KW-0336">GPI-anchor</keyword>
<keyword id="KW-0378">Hydrolase</keyword>
<keyword id="KW-0449">Lipoprotein</keyword>
<keyword id="KW-0472">Membrane</keyword>
<keyword id="KW-0624">Polysaccharide degradation</keyword>
<keyword id="KW-0732">Signal</keyword>
<reference key="1">
    <citation type="journal article" date="2008" name="PLoS Genet.">
        <title>Genomic islands in the pathogenic filamentous fungus Aspergillus fumigatus.</title>
        <authorList>
            <person name="Fedorova N.D."/>
            <person name="Khaldi N."/>
            <person name="Joardar V.S."/>
            <person name="Maiti R."/>
            <person name="Amedeo P."/>
            <person name="Anderson M.J."/>
            <person name="Crabtree J."/>
            <person name="Silva J.C."/>
            <person name="Badger J.H."/>
            <person name="Albarraq A."/>
            <person name="Angiuoli S."/>
            <person name="Bussey H."/>
            <person name="Bowyer P."/>
            <person name="Cotty P.J."/>
            <person name="Dyer P.S."/>
            <person name="Egan A."/>
            <person name="Galens K."/>
            <person name="Fraser-Liggett C.M."/>
            <person name="Haas B.J."/>
            <person name="Inman J.M."/>
            <person name="Kent R."/>
            <person name="Lemieux S."/>
            <person name="Malavazi I."/>
            <person name="Orvis J."/>
            <person name="Roemer T."/>
            <person name="Ronning C.M."/>
            <person name="Sundaram J.P."/>
            <person name="Sutton G."/>
            <person name="Turner G."/>
            <person name="Venter J.C."/>
            <person name="White O.R."/>
            <person name="Whitty B.R."/>
            <person name="Youngman P."/>
            <person name="Wolfe K.H."/>
            <person name="Goldman G.H."/>
            <person name="Wortman J.R."/>
            <person name="Jiang B."/>
            <person name="Denning D.W."/>
            <person name="Nierman W.C."/>
        </authorList>
    </citation>
    <scope>NUCLEOTIDE SEQUENCE [LARGE SCALE GENOMIC DNA]</scope>
    <source>
        <strain>CBS 144.89 / FGSC A1163 / CEA10</strain>
    </source>
</reference>
<organism>
    <name type="scientific">Aspergillus fumigatus (strain CBS 144.89 / FGSC A1163 / CEA10)</name>
    <name type="common">Neosartorya fumigata</name>
    <dbReference type="NCBI Taxonomy" id="451804"/>
    <lineage>
        <taxon>Eukaryota</taxon>
        <taxon>Fungi</taxon>
        <taxon>Dikarya</taxon>
        <taxon>Ascomycota</taxon>
        <taxon>Pezizomycotina</taxon>
        <taxon>Eurotiomycetes</taxon>
        <taxon>Eurotiomycetidae</taxon>
        <taxon>Eurotiales</taxon>
        <taxon>Aspergillaceae</taxon>
        <taxon>Aspergillus</taxon>
        <taxon>Aspergillus subgen. Fumigati</taxon>
    </lineage>
</organism>
<feature type="signal peptide" evidence="2">
    <location>
        <begin position="1"/>
        <end position="21"/>
    </location>
</feature>
<feature type="chain" id="PRO_0000395084" description="Probable endo-1,3(4)-beta-glucanase AFUB_029980">
    <location>
        <begin position="22"/>
        <end position="630"/>
    </location>
</feature>
<feature type="propeptide" id="PRO_0000395085" description="Removed in mature form" evidence="2">
    <location>
        <begin position="631"/>
        <end position="652"/>
    </location>
</feature>
<feature type="domain" description="GH16" evidence="3">
    <location>
        <begin position="36"/>
        <end position="289"/>
    </location>
</feature>
<feature type="region of interest" description="Disordered" evidence="4">
    <location>
        <begin position="379"/>
        <end position="423"/>
    </location>
</feature>
<feature type="region of interest" description="Disordered" evidence="4">
    <location>
        <begin position="509"/>
        <end position="551"/>
    </location>
</feature>
<feature type="compositionally biased region" description="Polar residues" evidence="4">
    <location>
        <begin position="390"/>
        <end position="410"/>
    </location>
</feature>
<feature type="compositionally biased region" description="Acidic residues" evidence="4">
    <location>
        <begin position="529"/>
        <end position="540"/>
    </location>
</feature>
<feature type="active site" description="Nucleophile" evidence="1">
    <location>
        <position position="145"/>
    </location>
</feature>
<feature type="active site" description="Proton donor" evidence="1">
    <location>
        <position position="150"/>
    </location>
</feature>
<feature type="lipid moiety-binding region" description="GPI-anchor amidated asparagine" evidence="2">
    <location>
        <position position="630"/>
    </location>
</feature>
<feature type="glycosylation site" description="N-linked (GlcNAc...) asparagine" evidence="2">
    <location>
        <position position="64"/>
    </location>
</feature>
<feature type="glycosylation site" description="N-linked (GlcNAc...) asparagine" evidence="2">
    <location>
        <position position="200"/>
    </location>
</feature>
<feature type="glycosylation site" description="N-linked (GlcNAc...) asparagine" evidence="2">
    <location>
        <position position="208"/>
    </location>
</feature>
<feature type="glycosylation site" description="N-linked (GlcNAc...) asparagine" evidence="2">
    <location>
        <position position="453"/>
    </location>
</feature>